<gene>
    <name type="primary">GAL4</name>
    <name type="ordered locus">YPL248C</name>
</gene>
<name>GAL4_YEAST</name>
<feature type="chain" id="PRO_0000114951" description="Regulatory protein GAL4">
    <location>
        <begin position="1"/>
        <end position="881"/>
    </location>
</feature>
<feature type="DNA-binding region" description="Zn(2)-C6 fungal-type" evidence="1">
    <location>
        <begin position="11"/>
        <end position="38"/>
    </location>
</feature>
<feature type="region of interest" description="Disordered" evidence="2">
    <location>
        <begin position="723"/>
        <end position="743"/>
    </location>
</feature>
<feature type="short sequence motif" description="9aaTAD">
    <location>
        <begin position="862"/>
        <end position="870"/>
    </location>
</feature>
<feature type="binding site" evidence="6 9">
    <location>
        <position position="11"/>
    </location>
    <ligand>
        <name>Zn(2+)</name>
        <dbReference type="ChEBI" id="CHEBI:29105"/>
        <label>1</label>
    </ligand>
</feature>
<feature type="binding site" evidence="6 9">
    <location>
        <position position="11"/>
    </location>
    <ligand>
        <name>Zn(2+)</name>
        <dbReference type="ChEBI" id="CHEBI:29105"/>
        <label>2</label>
    </ligand>
</feature>
<feature type="binding site" evidence="6 9">
    <location>
        <position position="14"/>
    </location>
    <ligand>
        <name>Zn(2+)</name>
        <dbReference type="ChEBI" id="CHEBI:29105"/>
        <label>1</label>
    </ligand>
</feature>
<feature type="binding site" evidence="6 9">
    <location>
        <position position="21"/>
    </location>
    <ligand>
        <name>Zn(2+)</name>
        <dbReference type="ChEBI" id="CHEBI:29105"/>
        <label>1</label>
    </ligand>
</feature>
<feature type="binding site" evidence="6 9">
    <location>
        <position position="28"/>
    </location>
    <ligand>
        <name>Zn(2+)</name>
        <dbReference type="ChEBI" id="CHEBI:29105"/>
        <label>1</label>
    </ligand>
</feature>
<feature type="binding site" evidence="6 9">
    <location>
        <position position="28"/>
    </location>
    <ligand>
        <name>Zn(2+)</name>
        <dbReference type="ChEBI" id="CHEBI:29105"/>
        <label>2</label>
    </ligand>
</feature>
<feature type="binding site" evidence="6 9">
    <location>
        <position position="31"/>
    </location>
    <ligand>
        <name>Zn(2+)</name>
        <dbReference type="ChEBI" id="CHEBI:29105"/>
        <label>2</label>
    </ligand>
</feature>
<feature type="binding site" evidence="6 9">
    <location>
        <position position="38"/>
    </location>
    <ligand>
        <name>Zn(2+)</name>
        <dbReference type="ChEBI" id="CHEBI:29105"/>
        <label>2</label>
    </ligand>
</feature>
<feature type="modified residue" description="Phosphotyrosine" evidence="11">
    <location>
        <position position="694"/>
    </location>
</feature>
<feature type="modified residue" description="Phosphoserine" evidence="11">
    <location>
        <position position="696"/>
    </location>
</feature>
<feature type="modified residue" description="Phosphoserine" evidence="11">
    <location>
        <position position="699"/>
    </location>
</feature>
<feature type="modified residue" description="Phosphoserine" evidence="11">
    <location>
        <position position="703"/>
    </location>
</feature>
<feature type="modified residue" description="Phosphoserine" evidence="10">
    <location>
        <position position="712"/>
    </location>
</feature>
<feature type="mutagenesis site" description="Loss of DNA-binding." evidence="7">
    <original>P</original>
    <variation>L</variation>
    <location>
        <position position="26"/>
    </location>
</feature>
<feature type="helix" evidence="12">
    <location>
        <begin position="12"/>
        <end position="17"/>
    </location>
</feature>
<feature type="strand" evidence="12">
    <location>
        <begin position="25"/>
        <end position="27"/>
    </location>
</feature>
<feature type="helix" evidence="12">
    <location>
        <begin position="29"/>
        <end position="33"/>
    </location>
</feature>
<feature type="helix" evidence="12">
    <location>
        <begin position="51"/>
        <end position="71"/>
    </location>
</feature>
<feature type="strand" evidence="12">
    <location>
        <begin position="73"/>
        <end position="75"/>
    </location>
</feature>
<feature type="helix" evidence="12">
    <location>
        <begin position="77"/>
        <end position="82"/>
    </location>
</feature>
<feature type="helix" evidence="12">
    <location>
        <begin position="86"/>
        <end position="93"/>
    </location>
</feature>
<protein>
    <recommendedName>
        <fullName>Regulatory protein GAL4</fullName>
    </recommendedName>
</protein>
<keyword id="KW-0002">3D-structure</keyword>
<keyword id="KW-0010">Activator</keyword>
<keyword id="KW-0119">Carbohydrate metabolism</keyword>
<keyword id="KW-0238">DNA-binding</keyword>
<keyword id="KW-0299">Galactose metabolism</keyword>
<keyword id="KW-0479">Metal-binding</keyword>
<keyword id="KW-0539">Nucleus</keyword>
<keyword id="KW-0597">Phosphoprotein</keyword>
<keyword id="KW-1185">Reference proteome</keyword>
<keyword id="KW-0804">Transcription</keyword>
<keyword id="KW-0805">Transcription regulation</keyword>
<keyword id="KW-0862">Zinc</keyword>
<dbReference type="EMBL" id="K01486">
    <property type="protein sequence ID" value="AAA34626.1"/>
    <property type="molecule type" value="Genomic_DNA"/>
</dbReference>
<dbReference type="EMBL" id="Z67751">
    <property type="protein sequence ID" value="CAA91596.1"/>
    <property type="molecule type" value="Genomic_DNA"/>
</dbReference>
<dbReference type="EMBL" id="Z73604">
    <property type="protein sequence ID" value="CAA97969.1"/>
    <property type="molecule type" value="Genomic_DNA"/>
</dbReference>
<dbReference type="EMBL" id="BK006949">
    <property type="protein sequence ID" value="DAA11189.1"/>
    <property type="molecule type" value="Genomic_DNA"/>
</dbReference>
<dbReference type="PIR" id="A05022">
    <property type="entry name" value="RGBYG4"/>
</dbReference>
<dbReference type="RefSeq" id="NP_015076.1">
    <property type="nucleotide sequence ID" value="NM_001184062.1"/>
</dbReference>
<dbReference type="PDB" id="1AW6">
    <property type="method" value="NMR"/>
    <property type="chains" value="A=1-43"/>
</dbReference>
<dbReference type="PDB" id="1D66">
    <property type="method" value="X-ray"/>
    <property type="resolution" value="2.70 A"/>
    <property type="chains" value="A/B=1-65"/>
</dbReference>
<dbReference type="PDB" id="1HBW">
    <property type="method" value="NMR"/>
    <property type="chains" value="A/B=50-106"/>
</dbReference>
<dbReference type="PDB" id="3BTS">
    <property type="method" value="X-ray"/>
    <property type="resolution" value="2.70 A"/>
    <property type="chains" value="E/F=854-874"/>
</dbReference>
<dbReference type="PDB" id="3COQ">
    <property type="method" value="X-ray"/>
    <property type="resolution" value="2.40 A"/>
    <property type="chains" value="A/B=8-96"/>
</dbReference>
<dbReference type="PDB" id="7UIK">
    <property type="method" value="EM"/>
    <property type="resolution" value="7.70 A"/>
    <property type="chains" value="T/U=1-147"/>
</dbReference>
<dbReference type="PDB" id="7UIO">
    <property type="method" value="EM"/>
    <property type="resolution" value="3.30 A"/>
    <property type="chains" value="GA/GB=1-147"/>
</dbReference>
<dbReference type="PDBsum" id="1AW6"/>
<dbReference type="PDBsum" id="1D66"/>
<dbReference type="PDBsum" id="1HBW"/>
<dbReference type="PDBsum" id="3BTS"/>
<dbReference type="PDBsum" id="3COQ"/>
<dbReference type="PDBsum" id="7UIK"/>
<dbReference type="PDBsum" id="7UIO"/>
<dbReference type="BMRB" id="P04386"/>
<dbReference type="EMDB" id="EMD-26547"/>
<dbReference type="EMDB" id="EMD-26551"/>
<dbReference type="SMR" id="P04386"/>
<dbReference type="BioGRID" id="35915">
    <property type="interactions" value="178"/>
</dbReference>
<dbReference type="ComplexPortal" id="CPX-1044">
    <property type="entry name" value="GAL4-GAL80 transcription repressor complex"/>
</dbReference>
<dbReference type="DIP" id="DIP-593N"/>
<dbReference type="FunCoup" id="P04386">
    <property type="interactions" value="1252"/>
</dbReference>
<dbReference type="IntAct" id="P04386">
    <property type="interactions" value="6"/>
</dbReference>
<dbReference type="MINT" id="P04386"/>
<dbReference type="STRING" id="4932.YPL248C"/>
<dbReference type="BindingDB" id="P04386"/>
<dbReference type="iPTMnet" id="P04386"/>
<dbReference type="PaxDb" id="4932-YPL248C"/>
<dbReference type="PeptideAtlas" id="P04386"/>
<dbReference type="EnsemblFungi" id="YPL248C_mRNA">
    <property type="protein sequence ID" value="YPL248C"/>
    <property type="gene ID" value="YPL248C"/>
</dbReference>
<dbReference type="GeneID" id="855828"/>
<dbReference type="KEGG" id="sce:YPL248C"/>
<dbReference type="AGR" id="SGD:S000006169"/>
<dbReference type="SGD" id="S000006169">
    <property type="gene designation" value="GAL4"/>
</dbReference>
<dbReference type="VEuPathDB" id="FungiDB:YPL248C"/>
<dbReference type="eggNOG" id="ENOG502QSMN">
    <property type="taxonomic scope" value="Eukaryota"/>
</dbReference>
<dbReference type="HOGENOM" id="CLU_008599_2_0_1"/>
<dbReference type="InParanoid" id="P04386"/>
<dbReference type="OMA" id="PEGTGYF"/>
<dbReference type="OrthoDB" id="3364175at2759"/>
<dbReference type="BioCyc" id="YEAST:G3O-34134-MONOMER"/>
<dbReference type="BioGRID-ORCS" id="855828">
    <property type="hits" value="0 hits in 13 CRISPR screens"/>
</dbReference>
<dbReference type="EvolutionaryTrace" id="P04386"/>
<dbReference type="PRO" id="PR:P04386"/>
<dbReference type="Proteomes" id="UP000002311">
    <property type="component" value="Chromosome XVI"/>
</dbReference>
<dbReference type="RNAct" id="P04386">
    <property type="molecule type" value="protein"/>
</dbReference>
<dbReference type="GO" id="GO:0005634">
    <property type="term" value="C:nucleus"/>
    <property type="evidence" value="ECO:0000314"/>
    <property type="project" value="ComplexPortal"/>
</dbReference>
<dbReference type="GO" id="GO:0017053">
    <property type="term" value="C:transcription repressor complex"/>
    <property type="evidence" value="ECO:0000303"/>
    <property type="project" value="ComplexPortal"/>
</dbReference>
<dbReference type="GO" id="GO:0001228">
    <property type="term" value="F:DNA-binding transcription activator activity, RNA polymerase II-specific"/>
    <property type="evidence" value="ECO:0000314"/>
    <property type="project" value="SGD"/>
</dbReference>
<dbReference type="GO" id="GO:0000981">
    <property type="term" value="F:DNA-binding transcription factor activity, RNA polymerase II-specific"/>
    <property type="evidence" value="ECO:0000315"/>
    <property type="project" value="SGD"/>
</dbReference>
<dbReference type="GO" id="GO:0042802">
    <property type="term" value="F:identical protein binding"/>
    <property type="evidence" value="ECO:0000353"/>
    <property type="project" value="IntAct"/>
</dbReference>
<dbReference type="GO" id="GO:0000978">
    <property type="term" value="F:RNA polymerase II cis-regulatory region sequence-specific DNA binding"/>
    <property type="evidence" value="ECO:0000314"/>
    <property type="project" value="SGD"/>
</dbReference>
<dbReference type="GO" id="GO:0061629">
    <property type="term" value="F:RNA polymerase II-specific DNA-binding transcription factor binding"/>
    <property type="evidence" value="ECO:0000314"/>
    <property type="project" value="SGD"/>
</dbReference>
<dbReference type="GO" id="GO:0008270">
    <property type="term" value="F:zinc ion binding"/>
    <property type="evidence" value="ECO:0007669"/>
    <property type="project" value="InterPro"/>
</dbReference>
<dbReference type="GO" id="GO:0006351">
    <property type="term" value="P:DNA-templated transcription"/>
    <property type="evidence" value="ECO:0007669"/>
    <property type="project" value="InterPro"/>
</dbReference>
<dbReference type="GO" id="GO:0006012">
    <property type="term" value="P:galactose metabolic process"/>
    <property type="evidence" value="ECO:0000315"/>
    <property type="project" value="ComplexPortal"/>
</dbReference>
<dbReference type="GO" id="GO:0045944">
    <property type="term" value="P:positive regulation of transcription by RNA polymerase II"/>
    <property type="evidence" value="ECO:0000314"/>
    <property type="project" value="SGD"/>
</dbReference>
<dbReference type="GO" id="GO:0000431">
    <property type="term" value="P:regulation of transcription from RNA polymerase II promoter by galactose"/>
    <property type="evidence" value="ECO:0000315"/>
    <property type="project" value="ComplexPortal"/>
</dbReference>
<dbReference type="CDD" id="cd12148">
    <property type="entry name" value="fungal_TF_MHR"/>
    <property type="match status" value="1"/>
</dbReference>
<dbReference type="CDD" id="cd00067">
    <property type="entry name" value="GAL4"/>
    <property type="match status" value="1"/>
</dbReference>
<dbReference type="CDD" id="cd14654">
    <property type="entry name" value="ZIP_Gal4"/>
    <property type="match status" value="1"/>
</dbReference>
<dbReference type="DisProt" id="DP02132"/>
<dbReference type="FunFam" id="4.10.240.10:FF:000009">
    <property type="entry name" value="C6 transcription factor (Gal4)"/>
    <property type="match status" value="1"/>
</dbReference>
<dbReference type="Gene3D" id="1.20.5.170">
    <property type="match status" value="1"/>
</dbReference>
<dbReference type="Gene3D" id="4.10.240.10">
    <property type="entry name" value="Zn(2)-C6 fungal-type DNA-binding domain"/>
    <property type="match status" value="1"/>
</dbReference>
<dbReference type="InterPro" id="IPR046347">
    <property type="entry name" value="bZIP_sf"/>
</dbReference>
<dbReference type="InterPro" id="IPR051127">
    <property type="entry name" value="Fungal_SecMet_Regulators"/>
</dbReference>
<dbReference type="InterPro" id="IPR005600">
    <property type="entry name" value="Gal4_dimer_dom"/>
</dbReference>
<dbReference type="InterPro" id="IPR007219">
    <property type="entry name" value="Transcription_factor_dom_fun"/>
</dbReference>
<dbReference type="InterPro" id="IPR036864">
    <property type="entry name" value="Zn2-C6_fun-type_DNA-bd_sf"/>
</dbReference>
<dbReference type="InterPro" id="IPR001138">
    <property type="entry name" value="Zn2Cys6_DnaBD"/>
</dbReference>
<dbReference type="PANTHER" id="PTHR47424">
    <property type="entry name" value="REGULATORY PROTEIN GAL4"/>
    <property type="match status" value="1"/>
</dbReference>
<dbReference type="PANTHER" id="PTHR47424:SF3">
    <property type="entry name" value="REGULATORY PROTEIN GAL4"/>
    <property type="match status" value="1"/>
</dbReference>
<dbReference type="Pfam" id="PF04082">
    <property type="entry name" value="Fungal_trans"/>
    <property type="match status" value="1"/>
</dbReference>
<dbReference type="Pfam" id="PF03902">
    <property type="entry name" value="Gal4_dimer"/>
    <property type="match status" value="1"/>
</dbReference>
<dbReference type="Pfam" id="PF00172">
    <property type="entry name" value="Zn_clus"/>
    <property type="match status" value="1"/>
</dbReference>
<dbReference type="SMART" id="SM00906">
    <property type="entry name" value="Fungal_trans"/>
    <property type="match status" value="1"/>
</dbReference>
<dbReference type="SMART" id="SM00066">
    <property type="entry name" value="GAL4"/>
    <property type="match status" value="1"/>
</dbReference>
<dbReference type="SUPFAM" id="SSF57959">
    <property type="entry name" value="Leucine zipper domain"/>
    <property type="match status" value="1"/>
</dbReference>
<dbReference type="SUPFAM" id="SSF57701">
    <property type="entry name" value="Zn2/Cys6 DNA-binding domain"/>
    <property type="match status" value="1"/>
</dbReference>
<dbReference type="PROSITE" id="PS00463">
    <property type="entry name" value="ZN2_CY6_FUNGAL_1"/>
    <property type="match status" value="1"/>
</dbReference>
<dbReference type="PROSITE" id="PS50048">
    <property type="entry name" value="ZN2_CY6_FUNGAL_2"/>
    <property type="match status" value="1"/>
</dbReference>
<proteinExistence type="evidence at protein level"/>
<comment type="function">
    <text>This protein is a positive regulator for the gene expression of the galactose-induced genes such as GAL1, GAL2, GAL7, GAL10, and MEL1 which code for the enzymes used to convert galactose to glucose. It recognizes a 17 base pair sequence in (5'-CGGRNNRCYNYNCNCCG-3') the upstream activating sequence (UAS-G) of these genes.</text>
</comment>
<comment type="subunit">
    <text evidence="3 8">Binds DNA as a homodimer. Interacts directly with the mediator subunits GAL11/MED15 and SRB4/MED17.</text>
</comment>
<comment type="interaction">
    <interactant intactId="EBI-4407660">
        <id>P04386</id>
    </interactant>
    <interactant intactId="EBI-4407660">
        <id>P04386</id>
        <label>GAL4</label>
    </interactant>
    <organismsDiffer>false</organismsDiffer>
    <experiments>3</experiments>
</comment>
<comment type="interaction">
    <interactant intactId="EBI-4407660">
        <id>P04386</id>
    </interactant>
    <interactant intactId="EBI-2061197">
        <id>P04387</id>
        <label>GAL80</label>
    </interactant>
    <organismsDiffer>false</organismsDiffer>
    <experiments>3</experiments>
</comment>
<comment type="subcellular location">
    <subcellularLocation>
        <location>Nucleus</location>
    </subcellularLocation>
</comment>
<comment type="domain">
    <text evidence="5">The 9aaTAD motif (residues 862 to 870) is a transactivation domain present in a large number of yeast and animal transcription factors.</text>
</comment>
<comment type="PTM">
    <text>Association between GAL11 and GAL4 may serve to expedite phosphorylation of GAL4.</text>
</comment>
<comment type="miscellaneous">
    <text evidence="4">Present with 166 molecules/cell in log phase SD medium.</text>
</comment>
<evidence type="ECO:0000255" key="1">
    <source>
        <dbReference type="PROSITE-ProRule" id="PRU00227"/>
    </source>
</evidence>
<evidence type="ECO:0000256" key="2">
    <source>
        <dbReference type="SAM" id="MobiDB-lite"/>
    </source>
</evidence>
<evidence type="ECO:0000269" key="3">
    <source>
    </source>
</evidence>
<evidence type="ECO:0000269" key="4">
    <source>
    </source>
</evidence>
<evidence type="ECO:0000269" key="5">
    <source>
    </source>
</evidence>
<evidence type="ECO:0000269" key="6">
    <source>
    </source>
</evidence>
<evidence type="ECO:0000269" key="7">
    <source>
    </source>
</evidence>
<evidence type="ECO:0000269" key="8">
    <source>
    </source>
</evidence>
<evidence type="ECO:0007744" key="9">
    <source>
        <dbReference type="PDB" id="3COQ"/>
    </source>
</evidence>
<evidence type="ECO:0007744" key="10">
    <source>
    </source>
</evidence>
<evidence type="ECO:0007744" key="11">
    <source>
    </source>
</evidence>
<evidence type="ECO:0007829" key="12">
    <source>
        <dbReference type="PDB" id="3COQ"/>
    </source>
</evidence>
<accession>P04386</accession>
<accession>D6W3C3</accession>
<sequence>MKLLSSIEQACDICRLKKLKCSKEKPKCAKCLKNNWECRYSPKTKRSPLTRAHLTEVESRLERLEQLFLLIFPREDLDMILKMDSLQDIKALLTGLFVQDNVNKDAVTDRLASVETDMPLTLRQHRISATSSSEESSNKGQRQLTVSIDSAAHHDNSTIPLDFMPRDALHGFDWSEEDDMSDGLPFLKTDPNNNGFFGDGSLLCILRSIGFKPENYTNSNVNRLPTMITDRYTLASRSTTSRLLQSYLNNFHPYCPIVHSPTLMMLYNNQIEIASKDQWQILFNCILAIGAWCIEGESTDIDVFYYQNAKSHLTSKVFESGSIILVTALHLLSRYTQWRQKTNTSYNFHSFSIRMAISLGLNRDLPSSFSDSSILEQRRRIWWSVYSWEIQLSLLYGRSIQLSQNTISFPSSVDDVQRTTTGPTIYHGIIETARLLQVFTKIYELDKTVTAEKSPICAKKCLMICNEIEEVSRQAPKFLQMDISTTALTNLLKEHPWLSFTRFELKWKQLSLIIYVLRDFFTNFTQKKSQLEQDQNDHQSYEVKRCSIMLSDAAQRTVMSVSSYMDNHNVTPYFAWNCSYYLFNAVLVPIKTLLSNSKSNAENNETAQLLQQINTVLMLLKKLATFKIQTCEKYIQVLEEVCAPFLLSQCAIPLPHISYNNSNGSAIKNIVGSATIAQYPTLPEENVNNISVKYVSPGSVGPSPVPLKSGASFSDLVKLLSNRPPSRNSPVTIPRSTPSHRSVTPFLGQQQQLQSLVPLTPSALFGGANFNQSGNIADSSLSFTFTNSSNGPNLITTQTNSQALSQPIASSNVHDNFMNNEITASKIDDGNNSKPLSPGWTDQTAYNAFGITTGMFNTTTMDDVYNYLFDDEDTPPNPKKE</sequence>
<organism>
    <name type="scientific">Saccharomyces cerevisiae (strain ATCC 204508 / S288c)</name>
    <name type="common">Baker's yeast</name>
    <dbReference type="NCBI Taxonomy" id="559292"/>
    <lineage>
        <taxon>Eukaryota</taxon>
        <taxon>Fungi</taxon>
        <taxon>Dikarya</taxon>
        <taxon>Ascomycota</taxon>
        <taxon>Saccharomycotina</taxon>
        <taxon>Saccharomycetes</taxon>
        <taxon>Saccharomycetales</taxon>
        <taxon>Saccharomycetaceae</taxon>
        <taxon>Saccharomyces</taxon>
    </lineage>
</organism>
<reference key="1">
    <citation type="journal article" date="1984" name="Mol. Cell. Biol.">
        <title>Primary structure of the Saccharomyces cerevisiae GAL4 gene.</title>
        <authorList>
            <person name="Laughon A."/>
            <person name="Gesteland R.F."/>
        </authorList>
    </citation>
    <scope>NUCLEOTIDE SEQUENCE [GENOMIC DNA]</scope>
</reference>
<reference key="2">
    <citation type="journal article" date="1997" name="Nature">
        <title>The nucleotide sequence of Saccharomyces cerevisiae chromosome XVI.</title>
        <authorList>
            <person name="Bussey H."/>
            <person name="Storms R.K."/>
            <person name="Ahmed A."/>
            <person name="Albermann K."/>
            <person name="Allen E."/>
            <person name="Ansorge W."/>
            <person name="Araujo R."/>
            <person name="Aparicio A."/>
            <person name="Barrell B.G."/>
            <person name="Badcock K."/>
            <person name="Benes V."/>
            <person name="Botstein D."/>
            <person name="Bowman S."/>
            <person name="Brueckner M."/>
            <person name="Carpenter J."/>
            <person name="Cherry J.M."/>
            <person name="Chung E."/>
            <person name="Churcher C.M."/>
            <person name="Coster F."/>
            <person name="Davis K."/>
            <person name="Davis R.W."/>
            <person name="Dietrich F.S."/>
            <person name="Delius H."/>
            <person name="DiPaolo T."/>
            <person name="Dubois E."/>
            <person name="Duesterhoeft A."/>
            <person name="Duncan M."/>
            <person name="Floeth M."/>
            <person name="Fortin N."/>
            <person name="Friesen J.D."/>
            <person name="Fritz C."/>
            <person name="Goffeau A."/>
            <person name="Hall J."/>
            <person name="Hebling U."/>
            <person name="Heumann K."/>
            <person name="Hilbert H."/>
            <person name="Hillier L.W."/>
            <person name="Hunicke-Smith S."/>
            <person name="Hyman R.W."/>
            <person name="Johnston M."/>
            <person name="Kalman S."/>
            <person name="Kleine K."/>
            <person name="Komp C."/>
            <person name="Kurdi O."/>
            <person name="Lashkari D."/>
            <person name="Lew H."/>
            <person name="Lin A."/>
            <person name="Lin D."/>
            <person name="Louis E.J."/>
            <person name="Marathe R."/>
            <person name="Messenguy F."/>
            <person name="Mewes H.-W."/>
            <person name="Mirtipati S."/>
            <person name="Moestl D."/>
            <person name="Mueller-Auer S."/>
            <person name="Namath A."/>
            <person name="Nentwich U."/>
            <person name="Oefner P."/>
            <person name="Pearson D."/>
            <person name="Petel F.X."/>
            <person name="Pohl T.M."/>
            <person name="Purnelle B."/>
            <person name="Rajandream M.A."/>
            <person name="Rechmann S."/>
            <person name="Rieger M."/>
            <person name="Riles L."/>
            <person name="Roberts D."/>
            <person name="Schaefer M."/>
            <person name="Scharfe M."/>
            <person name="Scherens B."/>
            <person name="Schramm S."/>
            <person name="Schroeder M."/>
            <person name="Sdicu A.-M."/>
            <person name="Tettelin H."/>
            <person name="Urrestarazu L.A."/>
            <person name="Ushinsky S."/>
            <person name="Vierendeels F."/>
            <person name="Vissers S."/>
            <person name="Voss H."/>
            <person name="Walsh S.V."/>
            <person name="Wambutt R."/>
            <person name="Wang Y."/>
            <person name="Wedler E."/>
            <person name="Wedler H."/>
            <person name="Winnett E."/>
            <person name="Zhong W.-W."/>
            <person name="Zollner A."/>
            <person name="Vo D.H."/>
            <person name="Hani J."/>
        </authorList>
    </citation>
    <scope>NUCLEOTIDE SEQUENCE [LARGE SCALE GENOMIC DNA]</scope>
    <source>
        <strain>ATCC 204508 / S288c</strain>
    </source>
</reference>
<reference key="3">
    <citation type="journal article" date="2014" name="G3 (Bethesda)">
        <title>The reference genome sequence of Saccharomyces cerevisiae: Then and now.</title>
        <authorList>
            <person name="Engel S.R."/>
            <person name="Dietrich F.S."/>
            <person name="Fisk D.G."/>
            <person name="Binkley G."/>
            <person name="Balakrishnan R."/>
            <person name="Costanzo M.C."/>
            <person name="Dwight S.S."/>
            <person name="Hitz B.C."/>
            <person name="Karra K."/>
            <person name="Nash R.S."/>
            <person name="Weng S."/>
            <person name="Wong E.D."/>
            <person name="Lloyd P."/>
            <person name="Skrzypek M.S."/>
            <person name="Miyasato S.R."/>
            <person name="Simison M."/>
            <person name="Cherry J.M."/>
        </authorList>
    </citation>
    <scope>GENOME REANNOTATION</scope>
    <source>
        <strain>ATCC 204508 / S288c</strain>
    </source>
</reference>
<reference key="4">
    <citation type="journal article" date="1987" name="Nature">
        <title>Genetic evidence that zinc is an essential co-factor in the DNA binding domain of GAL4 protein.</title>
        <authorList>
            <person name="Johnston M."/>
        </authorList>
    </citation>
    <scope>MUTAGENESIS OF PRO-26</scope>
    <scope>ZINC REQUIREMENT</scope>
</reference>
<reference key="5">
    <citation type="journal article" date="1998" name="Mol. Cell">
        <title>An activator target in the RNA polymerase II holoenzyme.</title>
        <authorList>
            <person name="Koh S.S."/>
            <person name="Ansari A.Z."/>
            <person name="Ptashne M."/>
            <person name="Young R.A."/>
        </authorList>
    </citation>
    <scope>INTERACTION WITH SRB4</scope>
</reference>
<reference key="6">
    <citation type="journal article" date="2001" name="Biochemistry">
        <title>Evidence that Gal11 protein is a target of the Gal4 activation domain in the mediator.</title>
        <authorList>
            <person name="Jeong C.-J."/>
            <person name="Yang S.-H."/>
            <person name="Xie Y."/>
            <person name="Zhang L."/>
            <person name="Johnston S.A."/>
            <person name="Kodadek T."/>
        </authorList>
    </citation>
    <scope>INTERACTION WITH GAL11</scope>
</reference>
<reference key="7">
    <citation type="journal article" date="2003" name="Nature">
        <title>Global analysis of protein expression in yeast.</title>
        <authorList>
            <person name="Ghaemmaghami S."/>
            <person name="Huh W.-K."/>
            <person name="Bower K."/>
            <person name="Howson R.W."/>
            <person name="Belle A."/>
            <person name="Dephoure N."/>
            <person name="O'Shea E.K."/>
            <person name="Weissman J.S."/>
        </authorList>
    </citation>
    <scope>LEVEL OF PROTEIN EXPRESSION [LARGE SCALE ANALYSIS]</scope>
</reference>
<reference key="8">
    <citation type="journal article" date="2007" name="Genomics">
        <title>Nine-amino-acid transactivation domain: establishment and prediction utilities.</title>
        <authorList>
            <person name="Piskacek S."/>
            <person name="Gregor M."/>
            <person name="Nemethova M."/>
            <person name="Grabner M."/>
            <person name="Kovarik P."/>
            <person name="Piskacek M."/>
        </authorList>
    </citation>
    <scope>DOMAIN</scope>
</reference>
<reference key="9">
    <citation type="journal article" date="2008" name="Mol. Cell. Proteomics">
        <title>A multidimensional chromatography technology for in-depth phosphoproteome analysis.</title>
        <authorList>
            <person name="Albuquerque C.P."/>
            <person name="Smolka M.B."/>
            <person name="Payne S.H."/>
            <person name="Bafna V."/>
            <person name="Eng J."/>
            <person name="Zhou H."/>
        </authorList>
    </citation>
    <scope>PHOSPHORYLATION [LARGE SCALE ANALYSIS] AT SER-712</scope>
    <scope>IDENTIFICATION BY MASS SPECTROMETRY [LARGE SCALE ANALYSIS]</scope>
</reference>
<reference key="10">
    <citation type="journal article" date="2009" name="Science">
        <title>Global analysis of Cdk1 substrate phosphorylation sites provides insights into evolution.</title>
        <authorList>
            <person name="Holt L.J."/>
            <person name="Tuch B.B."/>
            <person name="Villen J."/>
            <person name="Johnson A.D."/>
            <person name="Gygi S.P."/>
            <person name="Morgan D.O."/>
        </authorList>
    </citation>
    <scope>PHOSPHORYLATION [LARGE SCALE ANALYSIS] AT TYR-694; SER-696; SER-699 AND SER-703</scope>
    <scope>IDENTIFICATION BY MASS SPECTROMETRY [LARGE SCALE ANALYSIS]</scope>
</reference>
<reference key="11">
    <citation type="journal article" date="1992" name="Nature">
        <title>DNA recognition by GAL4: structure of a protein-DNA complex.</title>
        <authorList>
            <person name="Marmorstein R."/>
            <person name="Carey M."/>
            <person name="Ptashne M."/>
            <person name="Harrison S.C."/>
        </authorList>
    </citation>
    <scope>X-RAY CRYSTALLOGRAPHY (2.7 ANGSTROMS) OF 1-65</scope>
</reference>
<reference key="12">
    <citation type="journal article" date="1990" name="Proc. Natl. Acad. Sci. U.S.A.">
        <title>GAL4 transcription factor is not a 'zinc finger' but forms a Zn(II)2Cys6 binuclear cluster.</title>
        <authorList>
            <person name="Pan T."/>
            <person name="Coleman J.E."/>
        </authorList>
    </citation>
    <scope>STRUCTURE BY NMR OF ZINC-BINDING REGION</scope>
</reference>
<reference key="13">
    <citation type="journal article" date="1991" name="Biochemistry">
        <title>Sequential assignments of the 1H NMR resonances of Zn(II)2 and 113Cd(II)2 derivatives of the DNA-binding domain of the GAL4 transcription factor reveal a novel structural motif for specific DNA recognition.</title>
        <authorList>
            <person name="Pan T."/>
            <person name="Coleman J.E."/>
        </authorList>
    </citation>
    <scope>STRUCTURE BY NMR OF ZINC-BINDING REGION</scope>
</reference>
<reference key="14">
    <citation type="journal article" date="1990" name="FEBS Lett.">
        <title>Complete assignment of the 1H NMR spectrum and secondary structure of the DNA binding domain of GAL4.</title>
        <authorList>
            <person name="Gadhavi P.L."/>
            <person name="Raine A.R.C."/>
            <person name="Alefounder P.R."/>
            <person name="Laue E.D."/>
        </authorList>
    </citation>
    <scope>STRUCTURE BY NMR OF ZINC-BINDING REGION</scope>
</reference>
<reference key="15">
    <citation type="journal article" date="1992" name="Nature">
        <title>Structure of the DNA-binding domain of zinc GAL4.</title>
        <authorList>
            <person name="Kraulis P.J."/>
            <person name="Raine A.R.C."/>
            <person name="Gadhavi P.L."/>
            <person name="Laue E.D."/>
        </authorList>
    </citation>
    <scope>STRUCTURE BY NMR OF ZINC-BINDING REGION</scope>
</reference>
<reference key="16">
    <citation type="journal article" date="1992" name="Nature">
        <title>Solution structure of the DNA-binding domain of Cd2-GAL4 from S. cerevisiae.</title>
        <authorList>
            <person name="Baleja J.D."/>
            <person name="Marmorstein R."/>
            <person name="Harrison S.C."/>
            <person name="Wagner G."/>
        </authorList>
    </citation>
    <scope>STRUCTURE BY NMR OF ZINC-BINDING REGION</scope>
</reference>
<reference key="17">
    <citation type="journal article" date="2008" name="Structure">
        <title>Structural basis for dimerization in DNA recognition by Gal4.</title>
        <authorList>
            <person name="Hong M."/>
            <person name="Fitzgerald M.X."/>
            <person name="Harper S."/>
            <person name="Luo C."/>
            <person name="Speicher D.W."/>
            <person name="Marmorstein R."/>
        </authorList>
    </citation>
    <scope>X-RAY CRYSTALLOGRAPHY (2.40 ANGSTROMS) OF 8-96 IN COMPLEX WITH ZINC IONS</scope>
</reference>